<organism>
    <name type="scientific">Solanum lycopersicum</name>
    <name type="common">Tomato</name>
    <name type="synonym">Lycopersicon esculentum</name>
    <dbReference type="NCBI Taxonomy" id="4081"/>
    <lineage>
        <taxon>Eukaryota</taxon>
        <taxon>Viridiplantae</taxon>
        <taxon>Streptophyta</taxon>
        <taxon>Embryophyta</taxon>
        <taxon>Tracheophyta</taxon>
        <taxon>Spermatophyta</taxon>
        <taxon>Magnoliopsida</taxon>
        <taxon>eudicotyledons</taxon>
        <taxon>Gunneridae</taxon>
        <taxon>Pentapetalae</taxon>
        <taxon>asterids</taxon>
        <taxon>lamiids</taxon>
        <taxon>Solanales</taxon>
        <taxon>Solanaceae</taxon>
        <taxon>Solanoideae</taxon>
        <taxon>Solaneae</taxon>
        <taxon>Solanum</taxon>
        <taxon>Solanum subgen. Lycopersicon</taxon>
    </lineage>
</organism>
<evidence type="ECO:0000269" key="1">
    <source>
    </source>
</evidence>
<evidence type="ECO:0000305" key="2"/>
<keyword id="KW-0479">Metal-binding</keyword>
<keyword id="KW-0480">Metal-thiolate cluster</keyword>
<keyword id="KW-1185">Reference proteome</keyword>
<dbReference type="EMBL" id="L77966">
    <property type="protein sequence ID" value="AAB04675.1"/>
    <property type="molecule type" value="Genomic_DNA"/>
</dbReference>
<dbReference type="EMBL" id="Z68138">
    <property type="protein sequence ID" value="CAA92243.1"/>
    <property type="molecule type" value="mRNA"/>
</dbReference>
<dbReference type="PIR" id="T07076">
    <property type="entry name" value="T07076"/>
</dbReference>
<dbReference type="PIR" id="T07114">
    <property type="entry name" value="T07114"/>
</dbReference>
<dbReference type="RefSeq" id="NP_001234046.2">
    <property type="nucleotide sequence ID" value="NM_001247117.2"/>
</dbReference>
<dbReference type="FunCoup" id="Q40158">
    <property type="interactions" value="660"/>
</dbReference>
<dbReference type="STRING" id="4081.Q40158"/>
<dbReference type="PaxDb" id="4081-Solyc09g010800.2.1"/>
<dbReference type="GeneID" id="778298"/>
<dbReference type="KEGG" id="sly:778298"/>
<dbReference type="eggNOG" id="KOG4738">
    <property type="taxonomic scope" value="Eukaryota"/>
</dbReference>
<dbReference type="HOGENOM" id="CLU_161105_1_0_1"/>
<dbReference type="InParanoid" id="Q40158"/>
<dbReference type="OrthoDB" id="1111048at2759"/>
<dbReference type="PhylomeDB" id="Q40158"/>
<dbReference type="Proteomes" id="UP000004994">
    <property type="component" value="Unplaced"/>
</dbReference>
<dbReference type="GO" id="GO:0046872">
    <property type="term" value="F:metal ion binding"/>
    <property type="evidence" value="ECO:0007669"/>
    <property type="project" value="UniProtKB-KW"/>
</dbReference>
<dbReference type="InterPro" id="IPR000347">
    <property type="entry name" value="Metalthion_15p"/>
</dbReference>
<dbReference type="PANTHER" id="PTHR33543">
    <property type="entry name" value="METALLOTHIONEIN-LIKE PROTEIN 2A"/>
    <property type="match status" value="1"/>
</dbReference>
<dbReference type="PANTHER" id="PTHR33543:SF33">
    <property type="entry name" value="METALLOTHIONEIN-LIKE PROTEIN 2B"/>
    <property type="match status" value="1"/>
</dbReference>
<dbReference type="Pfam" id="PF01439">
    <property type="entry name" value="Metallothio_2"/>
    <property type="match status" value="1"/>
</dbReference>
<reference key="1">
    <citation type="submission" date="1996-07" db="EMBL/GenBank/DDBJ databases">
        <authorList>
            <person name="Whitelaw C.A."/>
            <person name="Lehuquet J.A."/>
            <person name="Thurman D.A."/>
            <person name="Tomsett A.B."/>
        </authorList>
    </citation>
    <scope>NUCLEOTIDE SEQUENCE</scope>
    <source>
        <strain>cv. Ailsa Craig</strain>
    </source>
</reference>
<reference key="2">
    <citation type="journal article" date="1998" name="Plant Mol. Biol.">
        <title>Structure, expression and chromosomal localisation of the metallothionein-like gene family of tomato.</title>
        <authorList>
            <person name="Giritch A."/>
            <person name="Ganal M."/>
            <person name="Stephan U.W."/>
            <person name="Baumlein H."/>
        </authorList>
    </citation>
    <scope>NUCLEOTIDE SEQUENCE [MRNA]</scope>
    <scope>TISSUE SPECIFICITY</scope>
    <scope>INDUCTION</scope>
    <source>
        <strain>cv. Bonner Beste</strain>
        <tissue>Root</tissue>
    </source>
</reference>
<comment type="function">
    <text>Metallothioneins have a high content of cysteine residues that bind various heavy metals.</text>
</comment>
<comment type="tissue specificity">
    <text evidence="1">Mainly expressed in flowers and first leaves.</text>
</comment>
<comment type="induction">
    <text evidence="1">Strongly up regulated by heavy metals.</text>
</comment>
<comment type="similarity">
    <text evidence="2">Belongs to the metallothionein superfamily. Type 15 family.</text>
</comment>
<sequence length="82" mass="8253">MSCCGGNCGCGSSCKCGNGCGGCKMYPDMSYTESSTTTETLVLGVGPEKTSFGAMEMGESPVAENGCKCGSDCKCNPCTCSK</sequence>
<gene>
    <name type="primary">MTB</name>
    <name type="synonym">LEMT1</name>
</gene>
<accession>Q40158</accession>
<accession>Q43514</accession>
<protein>
    <recommendedName>
        <fullName>Metallothionein-like protein type 2 B</fullName>
    </recommendedName>
</protein>
<proteinExistence type="evidence at transcript level"/>
<name>MT2B_SOLLC</name>
<feature type="chain" id="PRO_0000197399" description="Metallothionein-like protein type 2 B">
    <location>
        <begin position="1"/>
        <end position="82"/>
    </location>
</feature>
<feature type="sequence conflict" description="In Ref. 2; CAA92243." evidence="2" ref="2">
    <original>G</original>
    <variation>D</variation>
    <location>
        <position position="17"/>
    </location>
</feature>